<accession>Q8V3T8</accession>
<organism>
    <name type="scientific">Infectious salmon anemia virus (isolate Atlantic salmon/Norway/810/9/99)</name>
    <name type="common">ISAV</name>
    <dbReference type="NCBI Taxonomy" id="652965"/>
    <lineage>
        <taxon>Viruses</taxon>
        <taxon>Riboviria</taxon>
        <taxon>Orthornavirae</taxon>
        <taxon>Negarnaviricota</taxon>
        <taxon>Polyploviricotina</taxon>
        <taxon>Insthoviricetes</taxon>
        <taxon>Articulavirales</taxon>
        <taxon>Orthomyxoviridae</taxon>
        <taxon>Isavirus</taxon>
        <taxon>Isavirus salaris</taxon>
    </lineage>
</organism>
<name>PA_ISAV8</name>
<comment type="function">
    <text evidence="1">Implicated in endonuclease cleavage of capped RNA primers. Displays an elongation factor activity in viral RNA synthesis. Dispensable for viral transcription, but not replication (By similarity).</text>
</comment>
<comment type="subunit">
    <text evidence="1">The RNA polymerase is composed of three subunits: PB1, PB2 and PA.</text>
</comment>
<comment type="PTM">
    <text evidence="1">Phosphorylated on serines and threonines by host kinases.</text>
</comment>
<reference key="1">
    <citation type="journal article" date="2002" name="J. Gen. Virol.">
        <title>Genomic organization of infectious salmon anaemia virus.</title>
        <authorList>
            <person name="Clouthier S.C."/>
            <person name="Rector T."/>
            <person name="Brown N.E."/>
            <person name="Anderson E.D."/>
        </authorList>
    </citation>
    <scope>NUCLEOTIDE SEQUENCE [GENOMIC RNA]</scope>
</reference>
<reference key="2">
    <citation type="journal article" date="2011" name="Virus Res.">
        <title>Infectious salmon anemia virus--genetics and pathogenesis.</title>
        <authorList>
            <person name="Cottet L."/>
            <person name="Rivas-Aravena A."/>
            <person name="Cortez-San Martin M."/>
            <person name="Sandino A.M."/>
            <person name="Spencer E."/>
        </authorList>
    </citation>
    <scope>REVIEW</scope>
</reference>
<organismHost>
    <name type="scientific">Gadus morhua</name>
    <name type="common">Atlantic cod</name>
    <dbReference type="NCBI Taxonomy" id="8049"/>
</organismHost>
<organismHost>
    <name type="scientific">Oncorhynchus kisutch</name>
    <name type="common">Coho salmon</name>
    <name type="synonym">Salmo kisutch</name>
    <dbReference type="NCBI Taxonomy" id="8019"/>
</organismHost>
<organismHost>
    <name type="scientific">Oncorhynchus mykiss</name>
    <name type="common">Rainbow trout</name>
    <name type="synonym">Salmo gairdneri</name>
    <dbReference type="NCBI Taxonomy" id="8022"/>
</organismHost>
<organismHost>
    <name type="scientific">Pollachius virens</name>
    <name type="common">Saithe</name>
    <name type="synonym">Gadus virens</name>
    <dbReference type="NCBI Taxonomy" id="8060"/>
</organismHost>
<organismHost>
    <name type="scientific">Salmo salar</name>
    <name type="common">Atlantic salmon</name>
    <dbReference type="NCBI Taxonomy" id="8030"/>
</organismHost>
<organismHost>
    <name type="scientific">Salmo trutta</name>
    <name type="common">Brown trout</name>
    <dbReference type="NCBI Taxonomy" id="8032"/>
</organismHost>
<keyword id="KW-0597">Phosphoprotein</keyword>
<keyword id="KW-1185">Reference proteome</keyword>
<sequence length="578" mass="65266">MDNLRECINRKRRLLALPDVPETSDAFLSDLRHLYMCVAFCDQHKTTGDESRFTNLELLDQDEALGAQRAFEAKHGIKGGSLGDVLDHELKKVIEFTFTSGSLYIAEQRKRKTQADSIIVCVSEGLNDFSVSHGVLDMGLVETGVNAVRDFCTQNGIPMKINQVGSTRTPTPISTCKISEQITRQINSTITERKMETVLAAIAIKPELKXTQKGCXXCKELEDENILWMDPQFCEIDESFPYRGGPYGNFLQELLLTTNDVETNGKDREEVVKXILDNKAFTVESGECIITLPDKMTCFGEQEKKRPATIDEVRTAGERFEQSVKPKTQRYGRLSDKWMELEKFIFTASKTEVDTFLSVGTERLESVGVCVGALHRATTTRIIRPMIQGGKCWGMMFKTKSKMGDTRKEGYCHAIIFGKGEDKSGQNKMTMMGKTVHWHLRVVKSKGDWMAQQLCANKSRIWQHDPELVTEGVTVLMTPFSQKIATISRWRAMRLDSMFHVSSAWHHSPACEAASAMLRKFVEIVHAINQKRDWGVVGSMEDMVKEVEEIGEHLQTACDFRVYNXCKALIQKIAVSTQ</sequence>
<evidence type="ECO:0000250" key="1"/>
<evidence type="ECO:0000303" key="2">
    <source>
    </source>
</evidence>
<proteinExistence type="inferred from homology"/>
<gene>
    <name evidence="2" type="primary">Segment-4</name>
</gene>
<protein>
    <recommendedName>
        <fullName>Polymerase acidic protein</fullName>
        <shortName>PA</shortName>
    </recommendedName>
    <alternativeName>
        <fullName>Protein 2</fullName>
        <shortName>P2</shortName>
    </alternativeName>
    <alternativeName>
        <fullName>RNA-directed RNA polymerase subunit P2</fullName>
    </alternativeName>
</protein>
<dbReference type="EMBL" id="AF404344">
    <property type="protein sequence ID" value="AAL67960.1"/>
    <property type="molecule type" value="Viral_cRNA"/>
</dbReference>
<dbReference type="KEGG" id="vg:71004594"/>
<dbReference type="Proteomes" id="UP000008772">
    <property type="component" value="Genome"/>
</dbReference>
<feature type="chain" id="PRO_0000403916" description="Polymerase acidic protein">
    <location>
        <begin position="1"/>
        <end position="578"/>
    </location>
</feature>